<protein>
    <recommendedName>
        <fullName evidence="1">Ketol-acid reductoisomerase (NADP(+))</fullName>
        <shortName evidence="1">KARI</shortName>
        <ecNumber evidence="1">1.1.1.86</ecNumber>
    </recommendedName>
    <alternativeName>
        <fullName evidence="1">Acetohydroxy-acid isomeroreductase</fullName>
        <shortName evidence="1">AHIR</shortName>
    </alternativeName>
    <alternativeName>
        <fullName evidence="1">Alpha-keto-beta-hydroxylacyl reductoisomerase</fullName>
    </alternativeName>
    <alternativeName>
        <fullName evidence="1">Ketol-acid reductoisomerase type 1</fullName>
    </alternativeName>
    <alternativeName>
        <fullName evidence="1">Ketol-acid reductoisomerase type I</fullName>
    </alternativeName>
</protein>
<evidence type="ECO:0000255" key="1">
    <source>
        <dbReference type="HAMAP-Rule" id="MF_00435"/>
    </source>
</evidence>
<evidence type="ECO:0000255" key="2">
    <source>
        <dbReference type="PROSITE-ProRule" id="PRU01197"/>
    </source>
</evidence>
<evidence type="ECO:0000255" key="3">
    <source>
        <dbReference type="PROSITE-ProRule" id="PRU01198"/>
    </source>
</evidence>
<proteinExistence type="inferred from homology"/>
<gene>
    <name evidence="1" type="primary">ilvC</name>
    <name type="ordered locus">Bxeno_A1215</name>
    <name type="ORF">Bxe_A3229</name>
</gene>
<organism>
    <name type="scientific">Paraburkholderia xenovorans (strain LB400)</name>
    <dbReference type="NCBI Taxonomy" id="266265"/>
    <lineage>
        <taxon>Bacteria</taxon>
        <taxon>Pseudomonadati</taxon>
        <taxon>Pseudomonadota</taxon>
        <taxon>Betaproteobacteria</taxon>
        <taxon>Burkholderiales</taxon>
        <taxon>Burkholderiaceae</taxon>
        <taxon>Paraburkholderia</taxon>
    </lineage>
</organism>
<name>ILVC_PARXL</name>
<reference key="1">
    <citation type="journal article" date="2006" name="Proc. Natl. Acad. Sci. U.S.A.">
        <title>Burkholderia xenovorans LB400 harbors a multi-replicon, 9.73-Mbp genome shaped for versatility.</title>
        <authorList>
            <person name="Chain P.S.G."/>
            <person name="Denef V.J."/>
            <person name="Konstantinidis K.T."/>
            <person name="Vergez L.M."/>
            <person name="Agullo L."/>
            <person name="Reyes V.L."/>
            <person name="Hauser L."/>
            <person name="Cordova M."/>
            <person name="Gomez L."/>
            <person name="Gonzalez M."/>
            <person name="Land M."/>
            <person name="Lao V."/>
            <person name="Larimer F."/>
            <person name="LiPuma J.J."/>
            <person name="Mahenthiralingam E."/>
            <person name="Malfatti S.A."/>
            <person name="Marx C.J."/>
            <person name="Parnell J.J."/>
            <person name="Ramette A."/>
            <person name="Richardson P."/>
            <person name="Seeger M."/>
            <person name="Smith D."/>
            <person name="Spilker T."/>
            <person name="Sul W.J."/>
            <person name="Tsoi T.V."/>
            <person name="Ulrich L.E."/>
            <person name="Zhulin I.B."/>
            <person name="Tiedje J.M."/>
        </authorList>
    </citation>
    <scope>NUCLEOTIDE SEQUENCE [LARGE SCALE GENOMIC DNA]</scope>
    <source>
        <strain>LB400</strain>
    </source>
</reference>
<sequence length="338" mass="36292">MKVFYDKDADLSLIKGKQVTIIGYGSQGHAHALNLKESGVNITVGLRKGGASWSKAENAGLQVKEVAEAVKGADVVMMLLPDEQIAEVYAKEVHANIKQGAALAFAHGFNVHYGQVIPRADLDVIMIAPKAPGHTVRGTYSQGGGVPHLIAVAQDKSGAARDIALSYAAANGGGRAGIIETNFREETETDLFGEQAVLCGGTVDLIKAGFETLVEAGYAPEMAYFECLHELKLIVDLIYEGGIANMNYSISNNAEYGEYVTGPRIVTAETKKAMKAVLTDIQTGEYAKSFILENKAGAPTLQSRRRLTAEHQIEQVGSKLRAMMPWIAKNKLVDQSKN</sequence>
<keyword id="KW-0028">Amino-acid biosynthesis</keyword>
<keyword id="KW-0100">Branched-chain amino acid biosynthesis</keyword>
<keyword id="KW-0460">Magnesium</keyword>
<keyword id="KW-0479">Metal-binding</keyword>
<keyword id="KW-0521">NADP</keyword>
<keyword id="KW-0560">Oxidoreductase</keyword>
<keyword id="KW-1185">Reference proteome</keyword>
<comment type="function">
    <text evidence="1">Involved in the biosynthesis of branched-chain amino acids (BCAA). Catalyzes an alkyl-migration followed by a ketol-acid reduction of (S)-2-acetolactate (S2AL) to yield (R)-2,3-dihydroxy-isovalerate. In the isomerase reaction, S2AL is rearranged via a Mg-dependent methyl migration to produce 3-hydroxy-3-methyl-2-ketobutyrate (HMKB). In the reductase reaction, this 2-ketoacid undergoes a metal-dependent reduction by NADPH to yield (R)-2,3-dihydroxy-isovalerate.</text>
</comment>
<comment type="catalytic activity">
    <reaction evidence="1">
        <text>(2R)-2,3-dihydroxy-3-methylbutanoate + NADP(+) = (2S)-2-acetolactate + NADPH + H(+)</text>
        <dbReference type="Rhea" id="RHEA:22068"/>
        <dbReference type="ChEBI" id="CHEBI:15378"/>
        <dbReference type="ChEBI" id="CHEBI:49072"/>
        <dbReference type="ChEBI" id="CHEBI:57783"/>
        <dbReference type="ChEBI" id="CHEBI:58349"/>
        <dbReference type="ChEBI" id="CHEBI:58476"/>
        <dbReference type="EC" id="1.1.1.86"/>
    </reaction>
</comment>
<comment type="catalytic activity">
    <reaction evidence="1">
        <text>(2R,3R)-2,3-dihydroxy-3-methylpentanoate + NADP(+) = (S)-2-ethyl-2-hydroxy-3-oxobutanoate + NADPH + H(+)</text>
        <dbReference type="Rhea" id="RHEA:13493"/>
        <dbReference type="ChEBI" id="CHEBI:15378"/>
        <dbReference type="ChEBI" id="CHEBI:49256"/>
        <dbReference type="ChEBI" id="CHEBI:49258"/>
        <dbReference type="ChEBI" id="CHEBI:57783"/>
        <dbReference type="ChEBI" id="CHEBI:58349"/>
        <dbReference type="EC" id="1.1.1.86"/>
    </reaction>
</comment>
<comment type="cofactor">
    <cofactor evidence="1">
        <name>Mg(2+)</name>
        <dbReference type="ChEBI" id="CHEBI:18420"/>
    </cofactor>
    <text evidence="1">Binds 2 magnesium ions per subunit.</text>
</comment>
<comment type="pathway">
    <text evidence="1">Amino-acid biosynthesis; L-isoleucine biosynthesis; L-isoleucine from 2-oxobutanoate: step 2/4.</text>
</comment>
<comment type="pathway">
    <text evidence="1">Amino-acid biosynthesis; L-valine biosynthesis; L-valine from pyruvate: step 2/4.</text>
</comment>
<comment type="similarity">
    <text evidence="1">Belongs to the ketol-acid reductoisomerase family.</text>
</comment>
<feature type="chain" id="PRO_0000252754" description="Ketol-acid reductoisomerase (NADP(+))">
    <location>
        <begin position="1"/>
        <end position="338"/>
    </location>
</feature>
<feature type="domain" description="KARI N-terminal Rossmann" evidence="2">
    <location>
        <begin position="1"/>
        <end position="181"/>
    </location>
</feature>
<feature type="domain" description="KARI C-terminal knotted" evidence="3">
    <location>
        <begin position="182"/>
        <end position="327"/>
    </location>
</feature>
<feature type="active site" evidence="1">
    <location>
        <position position="107"/>
    </location>
</feature>
<feature type="binding site" evidence="1">
    <location>
        <begin position="24"/>
        <end position="27"/>
    </location>
    <ligand>
        <name>NADP(+)</name>
        <dbReference type="ChEBI" id="CHEBI:58349"/>
    </ligand>
</feature>
<feature type="binding site" evidence="1">
    <location>
        <position position="47"/>
    </location>
    <ligand>
        <name>NADP(+)</name>
        <dbReference type="ChEBI" id="CHEBI:58349"/>
    </ligand>
</feature>
<feature type="binding site" evidence="1">
    <location>
        <position position="52"/>
    </location>
    <ligand>
        <name>NADP(+)</name>
        <dbReference type="ChEBI" id="CHEBI:58349"/>
    </ligand>
</feature>
<feature type="binding site" evidence="1">
    <location>
        <position position="133"/>
    </location>
    <ligand>
        <name>NADP(+)</name>
        <dbReference type="ChEBI" id="CHEBI:58349"/>
    </ligand>
</feature>
<feature type="binding site" evidence="1">
    <location>
        <position position="190"/>
    </location>
    <ligand>
        <name>Mg(2+)</name>
        <dbReference type="ChEBI" id="CHEBI:18420"/>
        <label>1</label>
    </ligand>
</feature>
<feature type="binding site" evidence="1">
    <location>
        <position position="190"/>
    </location>
    <ligand>
        <name>Mg(2+)</name>
        <dbReference type="ChEBI" id="CHEBI:18420"/>
        <label>2</label>
    </ligand>
</feature>
<feature type="binding site" evidence="1">
    <location>
        <position position="194"/>
    </location>
    <ligand>
        <name>Mg(2+)</name>
        <dbReference type="ChEBI" id="CHEBI:18420"/>
        <label>1</label>
    </ligand>
</feature>
<feature type="binding site" evidence="1">
    <location>
        <position position="226"/>
    </location>
    <ligand>
        <name>Mg(2+)</name>
        <dbReference type="ChEBI" id="CHEBI:18420"/>
        <label>2</label>
    </ligand>
</feature>
<feature type="binding site" evidence="1">
    <location>
        <position position="230"/>
    </location>
    <ligand>
        <name>Mg(2+)</name>
        <dbReference type="ChEBI" id="CHEBI:18420"/>
        <label>2</label>
    </ligand>
</feature>
<feature type="binding site" evidence="1">
    <location>
        <position position="251"/>
    </location>
    <ligand>
        <name>substrate</name>
    </ligand>
</feature>
<accession>Q142I6</accession>
<dbReference type="EC" id="1.1.1.86" evidence="1"/>
<dbReference type="EMBL" id="CP000270">
    <property type="protein sequence ID" value="ABE29753.1"/>
    <property type="molecule type" value="Genomic_DNA"/>
</dbReference>
<dbReference type="RefSeq" id="WP_007175628.1">
    <property type="nucleotide sequence ID" value="NZ_CP008760.1"/>
</dbReference>
<dbReference type="SMR" id="Q142I6"/>
<dbReference type="STRING" id="266265.Bxe_A3229"/>
<dbReference type="KEGG" id="bxb:DR64_931"/>
<dbReference type="KEGG" id="bxe:Bxe_A3229"/>
<dbReference type="eggNOG" id="COG0059">
    <property type="taxonomic scope" value="Bacteria"/>
</dbReference>
<dbReference type="OrthoDB" id="9804088at2"/>
<dbReference type="UniPathway" id="UPA00047">
    <property type="reaction ID" value="UER00056"/>
</dbReference>
<dbReference type="UniPathway" id="UPA00049">
    <property type="reaction ID" value="UER00060"/>
</dbReference>
<dbReference type="Proteomes" id="UP000001817">
    <property type="component" value="Chromosome 1"/>
</dbReference>
<dbReference type="GO" id="GO:0005829">
    <property type="term" value="C:cytosol"/>
    <property type="evidence" value="ECO:0007669"/>
    <property type="project" value="TreeGrafter"/>
</dbReference>
<dbReference type="GO" id="GO:0004455">
    <property type="term" value="F:ketol-acid reductoisomerase activity"/>
    <property type="evidence" value="ECO:0007669"/>
    <property type="project" value="UniProtKB-UniRule"/>
</dbReference>
<dbReference type="GO" id="GO:0000287">
    <property type="term" value="F:magnesium ion binding"/>
    <property type="evidence" value="ECO:0007669"/>
    <property type="project" value="UniProtKB-UniRule"/>
</dbReference>
<dbReference type="GO" id="GO:0050661">
    <property type="term" value="F:NADP binding"/>
    <property type="evidence" value="ECO:0007669"/>
    <property type="project" value="InterPro"/>
</dbReference>
<dbReference type="GO" id="GO:0009097">
    <property type="term" value="P:isoleucine biosynthetic process"/>
    <property type="evidence" value="ECO:0007669"/>
    <property type="project" value="UniProtKB-UniRule"/>
</dbReference>
<dbReference type="GO" id="GO:0009099">
    <property type="term" value="P:L-valine biosynthetic process"/>
    <property type="evidence" value="ECO:0007669"/>
    <property type="project" value="UniProtKB-UniRule"/>
</dbReference>
<dbReference type="FunFam" id="3.40.50.720:FF:000023">
    <property type="entry name" value="Ketol-acid reductoisomerase (NADP(+))"/>
    <property type="match status" value="1"/>
</dbReference>
<dbReference type="Gene3D" id="6.10.240.10">
    <property type="match status" value="1"/>
</dbReference>
<dbReference type="Gene3D" id="3.40.50.720">
    <property type="entry name" value="NAD(P)-binding Rossmann-like Domain"/>
    <property type="match status" value="1"/>
</dbReference>
<dbReference type="HAMAP" id="MF_00435">
    <property type="entry name" value="IlvC"/>
    <property type="match status" value="1"/>
</dbReference>
<dbReference type="InterPro" id="IPR008927">
    <property type="entry name" value="6-PGluconate_DH-like_C_sf"/>
</dbReference>
<dbReference type="InterPro" id="IPR013023">
    <property type="entry name" value="KARI"/>
</dbReference>
<dbReference type="InterPro" id="IPR000506">
    <property type="entry name" value="KARI_C"/>
</dbReference>
<dbReference type="InterPro" id="IPR013116">
    <property type="entry name" value="KARI_N"/>
</dbReference>
<dbReference type="InterPro" id="IPR014359">
    <property type="entry name" value="KARI_prok"/>
</dbReference>
<dbReference type="InterPro" id="IPR036291">
    <property type="entry name" value="NAD(P)-bd_dom_sf"/>
</dbReference>
<dbReference type="NCBIfam" id="TIGR00465">
    <property type="entry name" value="ilvC"/>
    <property type="match status" value="1"/>
</dbReference>
<dbReference type="NCBIfam" id="NF004017">
    <property type="entry name" value="PRK05479.1"/>
    <property type="match status" value="1"/>
</dbReference>
<dbReference type="NCBIfam" id="NF009940">
    <property type="entry name" value="PRK13403.1"/>
    <property type="match status" value="1"/>
</dbReference>
<dbReference type="PANTHER" id="PTHR21371">
    <property type="entry name" value="KETOL-ACID REDUCTOISOMERASE, MITOCHONDRIAL"/>
    <property type="match status" value="1"/>
</dbReference>
<dbReference type="PANTHER" id="PTHR21371:SF1">
    <property type="entry name" value="KETOL-ACID REDUCTOISOMERASE, MITOCHONDRIAL"/>
    <property type="match status" value="1"/>
</dbReference>
<dbReference type="Pfam" id="PF01450">
    <property type="entry name" value="KARI_C"/>
    <property type="match status" value="1"/>
</dbReference>
<dbReference type="Pfam" id="PF07991">
    <property type="entry name" value="KARI_N"/>
    <property type="match status" value="1"/>
</dbReference>
<dbReference type="PIRSF" id="PIRSF000116">
    <property type="entry name" value="IlvC_gammaproteo"/>
    <property type="match status" value="1"/>
</dbReference>
<dbReference type="SUPFAM" id="SSF48179">
    <property type="entry name" value="6-phosphogluconate dehydrogenase C-terminal domain-like"/>
    <property type="match status" value="1"/>
</dbReference>
<dbReference type="SUPFAM" id="SSF51735">
    <property type="entry name" value="NAD(P)-binding Rossmann-fold domains"/>
    <property type="match status" value="1"/>
</dbReference>
<dbReference type="PROSITE" id="PS51851">
    <property type="entry name" value="KARI_C"/>
    <property type="match status" value="1"/>
</dbReference>
<dbReference type="PROSITE" id="PS51850">
    <property type="entry name" value="KARI_N"/>
    <property type="match status" value="1"/>
</dbReference>